<feature type="chain" id="PRO_0000252970" description="Glutamate 5-kinase">
    <location>
        <begin position="1"/>
        <end position="379"/>
    </location>
</feature>
<feature type="domain" description="PUA" evidence="1">
    <location>
        <begin position="282"/>
        <end position="360"/>
    </location>
</feature>
<feature type="binding site" evidence="1">
    <location>
        <position position="15"/>
    </location>
    <ligand>
        <name>ATP</name>
        <dbReference type="ChEBI" id="CHEBI:30616"/>
    </ligand>
</feature>
<feature type="binding site" evidence="1">
    <location>
        <position position="54"/>
    </location>
    <ligand>
        <name>substrate</name>
    </ligand>
</feature>
<feature type="binding site" evidence="1">
    <location>
        <position position="144"/>
    </location>
    <ligand>
        <name>substrate</name>
    </ligand>
</feature>
<feature type="binding site" evidence="1">
    <location>
        <position position="156"/>
    </location>
    <ligand>
        <name>substrate</name>
    </ligand>
</feature>
<feature type="binding site" evidence="1">
    <location>
        <begin position="176"/>
        <end position="177"/>
    </location>
    <ligand>
        <name>ATP</name>
        <dbReference type="ChEBI" id="CHEBI:30616"/>
    </ligand>
</feature>
<accession>Q2IMF3</accession>
<reference key="1">
    <citation type="submission" date="2006-01" db="EMBL/GenBank/DDBJ databases">
        <title>Complete sequence of Anaeromyxobacter dehalogenans 2CP-C.</title>
        <authorList>
            <person name="Copeland A."/>
            <person name="Lucas S."/>
            <person name="Lapidus A."/>
            <person name="Barry K."/>
            <person name="Detter J.C."/>
            <person name="Glavina T."/>
            <person name="Hammon N."/>
            <person name="Israni S."/>
            <person name="Pitluck S."/>
            <person name="Brettin T."/>
            <person name="Bruce D."/>
            <person name="Han C."/>
            <person name="Tapia R."/>
            <person name="Gilna P."/>
            <person name="Kiss H."/>
            <person name="Schmutz J."/>
            <person name="Larimer F."/>
            <person name="Land M."/>
            <person name="Kyrpides N."/>
            <person name="Anderson I."/>
            <person name="Sanford R.A."/>
            <person name="Ritalahti K.M."/>
            <person name="Thomas H.S."/>
            <person name="Kirby J.R."/>
            <person name="Zhulin I.B."/>
            <person name="Loeffler F.E."/>
            <person name="Richardson P."/>
        </authorList>
    </citation>
    <scope>NUCLEOTIDE SEQUENCE [LARGE SCALE GENOMIC DNA]</scope>
    <source>
        <strain>2CP-C</strain>
    </source>
</reference>
<proteinExistence type="inferred from homology"/>
<organism>
    <name type="scientific">Anaeromyxobacter dehalogenans (strain 2CP-C)</name>
    <dbReference type="NCBI Taxonomy" id="290397"/>
    <lineage>
        <taxon>Bacteria</taxon>
        <taxon>Pseudomonadati</taxon>
        <taxon>Myxococcota</taxon>
        <taxon>Myxococcia</taxon>
        <taxon>Myxococcales</taxon>
        <taxon>Cystobacterineae</taxon>
        <taxon>Anaeromyxobacteraceae</taxon>
        <taxon>Anaeromyxobacter</taxon>
    </lineage>
</organism>
<evidence type="ECO:0000255" key="1">
    <source>
        <dbReference type="HAMAP-Rule" id="MF_00456"/>
    </source>
</evidence>
<protein>
    <recommendedName>
        <fullName evidence="1">Glutamate 5-kinase</fullName>
        <ecNumber evidence="1">2.7.2.11</ecNumber>
    </recommendedName>
    <alternativeName>
        <fullName evidence="1">Gamma-glutamyl kinase</fullName>
        <shortName evidence="1">GK</shortName>
    </alternativeName>
</protein>
<name>PROB_ANADE</name>
<sequence length="379" mass="39855">MSRSALRRVKRLVVKVGTGTLTDRAGRFDRDNCARLASELAEVSRGRKVVLVSSGAVALGAERLGLARSRGKPWDLPTKQACAAAGQPHLMAAWGEALGRHGLVTAQVLLTADDLASRKRFLNARRTFERLLDAGAVPVVNENDTVAVDELKVGDNDTLAALVAGCVEADAVAMLTDVDGLYDRNPAEPGARLLRDVPRVTAEIERSAGGAGSERSVGGMITKVKAARRLGAQGVVTALLSGRRARALPALLAGEPVGTVFAPGAHRLSSRQGWLAAAARGKGVILVDAGARRALVEQGRSLLPSGVRGVQGQFGVGDPVDVAVDPARPFARGLAGYAADEVRRIAGLKTGEIERALGYKYLDEIVHRNDLVVLETGRE</sequence>
<keyword id="KW-0028">Amino-acid biosynthesis</keyword>
<keyword id="KW-0067">ATP-binding</keyword>
<keyword id="KW-0963">Cytoplasm</keyword>
<keyword id="KW-0418">Kinase</keyword>
<keyword id="KW-0547">Nucleotide-binding</keyword>
<keyword id="KW-0641">Proline biosynthesis</keyword>
<keyword id="KW-1185">Reference proteome</keyword>
<keyword id="KW-0808">Transferase</keyword>
<comment type="function">
    <text evidence="1">Catalyzes the transfer of a phosphate group to glutamate to form L-glutamate 5-phosphate.</text>
</comment>
<comment type="catalytic activity">
    <reaction evidence="1">
        <text>L-glutamate + ATP = L-glutamyl 5-phosphate + ADP</text>
        <dbReference type="Rhea" id="RHEA:14877"/>
        <dbReference type="ChEBI" id="CHEBI:29985"/>
        <dbReference type="ChEBI" id="CHEBI:30616"/>
        <dbReference type="ChEBI" id="CHEBI:58274"/>
        <dbReference type="ChEBI" id="CHEBI:456216"/>
        <dbReference type="EC" id="2.7.2.11"/>
    </reaction>
</comment>
<comment type="pathway">
    <text evidence="1">Amino-acid biosynthesis; L-proline biosynthesis; L-glutamate 5-semialdehyde from L-glutamate: step 1/2.</text>
</comment>
<comment type="subcellular location">
    <subcellularLocation>
        <location evidence="1">Cytoplasm</location>
    </subcellularLocation>
</comment>
<comment type="similarity">
    <text evidence="1">Belongs to the glutamate 5-kinase family.</text>
</comment>
<gene>
    <name evidence="1" type="primary">proB</name>
    <name type="ordered locus">Adeh_0211</name>
</gene>
<dbReference type="EC" id="2.7.2.11" evidence="1"/>
<dbReference type="EMBL" id="CP000251">
    <property type="protein sequence ID" value="ABC79988.1"/>
    <property type="molecule type" value="Genomic_DNA"/>
</dbReference>
<dbReference type="RefSeq" id="WP_011419271.1">
    <property type="nucleotide sequence ID" value="NC_007760.1"/>
</dbReference>
<dbReference type="SMR" id="Q2IMF3"/>
<dbReference type="STRING" id="290397.Adeh_0211"/>
<dbReference type="KEGG" id="ade:Adeh_0211"/>
<dbReference type="eggNOG" id="COG0263">
    <property type="taxonomic scope" value="Bacteria"/>
</dbReference>
<dbReference type="HOGENOM" id="CLU_025400_2_0_7"/>
<dbReference type="UniPathway" id="UPA00098">
    <property type="reaction ID" value="UER00359"/>
</dbReference>
<dbReference type="Proteomes" id="UP000001935">
    <property type="component" value="Chromosome"/>
</dbReference>
<dbReference type="GO" id="GO:0005829">
    <property type="term" value="C:cytosol"/>
    <property type="evidence" value="ECO:0007669"/>
    <property type="project" value="TreeGrafter"/>
</dbReference>
<dbReference type="GO" id="GO:0005524">
    <property type="term" value="F:ATP binding"/>
    <property type="evidence" value="ECO:0007669"/>
    <property type="project" value="UniProtKB-KW"/>
</dbReference>
<dbReference type="GO" id="GO:0004349">
    <property type="term" value="F:glutamate 5-kinase activity"/>
    <property type="evidence" value="ECO:0007669"/>
    <property type="project" value="UniProtKB-UniRule"/>
</dbReference>
<dbReference type="GO" id="GO:0003723">
    <property type="term" value="F:RNA binding"/>
    <property type="evidence" value="ECO:0007669"/>
    <property type="project" value="InterPro"/>
</dbReference>
<dbReference type="GO" id="GO:0055129">
    <property type="term" value="P:L-proline biosynthetic process"/>
    <property type="evidence" value="ECO:0007669"/>
    <property type="project" value="UniProtKB-UniRule"/>
</dbReference>
<dbReference type="CDD" id="cd04242">
    <property type="entry name" value="AAK_G5K_ProB"/>
    <property type="match status" value="1"/>
</dbReference>
<dbReference type="CDD" id="cd21157">
    <property type="entry name" value="PUA_G5K"/>
    <property type="match status" value="1"/>
</dbReference>
<dbReference type="FunFam" id="3.40.1160.10:FF:000018">
    <property type="entry name" value="Glutamate 5-kinase"/>
    <property type="match status" value="1"/>
</dbReference>
<dbReference type="Gene3D" id="3.40.1160.10">
    <property type="entry name" value="Acetylglutamate kinase-like"/>
    <property type="match status" value="1"/>
</dbReference>
<dbReference type="Gene3D" id="2.30.130.10">
    <property type="entry name" value="PUA domain"/>
    <property type="match status" value="1"/>
</dbReference>
<dbReference type="HAMAP" id="MF_00456">
    <property type="entry name" value="ProB"/>
    <property type="match status" value="1"/>
</dbReference>
<dbReference type="InterPro" id="IPR036393">
    <property type="entry name" value="AceGlu_kinase-like_sf"/>
</dbReference>
<dbReference type="InterPro" id="IPR001048">
    <property type="entry name" value="Asp/Glu/Uridylate_kinase"/>
</dbReference>
<dbReference type="InterPro" id="IPR041739">
    <property type="entry name" value="G5K_ProB"/>
</dbReference>
<dbReference type="InterPro" id="IPR001057">
    <property type="entry name" value="Glu/AcGlu_kinase"/>
</dbReference>
<dbReference type="InterPro" id="IPR011529">
    <property type="entry name" value="Glu_5kinase"/>
</dbReference>
<dbReference type="InterPro" id="IPR005715">
    <property type="entry name" value="Glu_5kinase/COase_Synthase"/>
</dbReference>
<dbReference type="InterPro" id="IPR019797">
    <property type="entry name" value="Glutamate_5-kinase_CS"/>
</dbReference>
<dbReference type="InterPro" id="IPR002478">
    <property type="entry name" value="PUA"/>
</dbReference>
<dbReference type="InterPro" id="IPR015947">
    <property type="entry name" value="PUA-like_sf"/>
</dbReference>
<dbReference type="InterPro" id="IPR036974">
    <property type="entry name" value="PUA_sf"/>
</dbReference>
<dbReference type="NCBIfam" id="TIGR01027">
    <property type="entry name" value="proB"/>
    <property type="match status" value="1"/>
</dbReference>
<dbReference type="PANTHER" id="PTHR43654">
    <property type="entry name" value="GLUTAMATE 5-KINASE"/>
    <property type="match status" value="1"/>
</dbReference>
<dbReference type="PANTHER" id="PTHR43654:SF1">
    <property type="entry name" value="ISOPENTENYL PHOSPHATE KINASE"/>
    <property type="match status" value="1"/>
</dbReference>
<dbReference type="Pfam" id="PF00696">
    <property type="entry name" value="AA_kinase"/>
    <property type="match status" value="1"/>
</dbReference>
<dbReference type="Pfam" id="PF01472">
    <property type="entry name" value="PUA"/>
    <property type="match status" value="1"/>
</dbReference>
<dbReference type="PIRSF" id="PIRSF000729">
    <property type="entry name" value="GK"/>
    <property type="match status" value="1"/>
</dbReference>
<dbReference type="PRINTS" id="PR00474">
    <property type="entry name" value="GLU5KINASE"/>
</dbReference>
<dbReference type="SMART" id="SM00359">
    <property type="entry name" value="PUA"/>
    <property type="match status" value="1"/>
</dbReference>
<dbReference type="SUPFAM" id="SSF53633">
    <property type="entry name" value="Carbamate kinase-like"/>
    <property type="match status" value="1"/>
</dbReference>
<dbReference type="SUPFAM" id="SSF88697">
    <property type="entry name" value="PUA domain-like"/>
    <property type="match status" value="1"/>
</dbReference>
<dbReference type="PROSITE" id="PS00902">
    <property type="entry name" value="GLUTAMATE_5_KINASE"/>
    <property type="match status" value="1"/>
</dbReference>
<dbReference type="PROSITE" id="PS50890">
    <property type="entry name" value="PUA"/>
    <property type="match status" value="1"/>
</dbReference>